<name>HIS3_THIDA</name>
<proteinExistence type="inferred from homology"/>
<gene>
    <name evidence="1" type="primary">hisI</name>
    <name type="ordered locus">Tbd_1707</name>
</gene>
<dbReference type="EC" id="3.5.4.19" evidence="1"/>
<dbReference type="EMBL" id="CP000116">
    <property type="protein sequence ID" value="AAZ97660.1"/>
    <property type="molecule type" value="Genomic_DNA"/>
</dbReference>
<dbReference type="RefSeq" id="WP_011312219.1">
    <property type="nucleotide sequence ID" value="NC_007404.1"/>
</dbReference>
<dbReference type="SMR" id="Q3SEU9"/>
<dbReference type="STRING" id="292415.Tbd_1707"/>
<dbReference type="KEGG" id="tbd:Tbd_1707"/>
<dbReference type="eggNOG" id="COG0139">
    <property type="taxonomic scope" value="Bacteria"/>
</dbReference>
<dbReference type="HOGENOM" id="CLU_048577_5_0_4"/>
<dbReference type="OrthoDB" id="9795769at2"/>
<dbReference type="UniPathway" id="UPA00031">
    <property type="reaction ID" value="UER00008"/>
</dbReference>
<dbReference type="Proteomes" id="UP000008291">
    <property type="component" value="Chromosome"/>
</dbReference>
<dbReference type="GO" id="GO:0005737">
    <property type="term" value="C:cytoplasm"/>
    <property type="evidence" value="ECO:0007669"/>
    <property type="project" value="UniProtKB-SubCell"/>
</dbReference>
<dbReference type="GO" id="GO:0000287">
    <property type="term" value="F:magnesium ion binding"/>
    <property type="evidence" value="ECO:0007669"/>
    <property type="project" value="UniProtKB-UniRule"/>
</dbReference>
<dbReference type="GO" id="GO:0004635">
    <property type="term" value="F:phosphoribosyl-AMP cyclohydrolase activity"/>
    <property type="evidence" value="ECO:0007669"/>
    <property type="project" value="UniProtKB-UniRule"/>
</dbReference>
<dbReference type="GO" id="GO:0008270">
    <property type="term" value="F:zinc ion binding"/>
    <property type="evidence" value="ECO:0007669"/>
    <property type="project" value="UniProtKB-UniRule"/>
</dbReference>
<dbReference type="GO" id="GO:0000105">
    <property type="term" value="P:L-histidine biosynthetic process"/>
    <property type="evidence" value="ECO:0007669"/>
    <property type="project" value="UniProtKB-UniRule"/>
</dbReference>
<dbReference type="FunFam" id="3.10.20.810:FF:000001">
    <property type="entry name" value="Histidine biosynthesis bifunctional protein HisIE"/>
    <property type="match status" value="1"/>
</dbReference>
<dbReference type="Gene3D" id="3.10.20.810">
    <property type="entry name" value="Phosphoribosyl-AMP cyclohydrolase"/>
    <property type="match status" value="1"/>
</dbReference>
<dbReference type="HAMAP" id="MF_01021">
    <property type="entry name" value="HisI"/>
    <property type="match status" value="1"/>
</dbReference>
<dbReference type="InterPro" id="IPR026660">
    <property type="entry name" value="PRA-CH"/>
</dbReference>
<dbReference type="InterPro" id="IPR002496">
    <property type="entry name" value="PRib_AMP_CycHydrolase_dom"/>
</dbReference>
<dbReference type="InterPro" id="IPR038019">
    <property type="entry name" value="PRib_AMP_CycHydrolase_sf"/>
</dbReference>
<dbReference type="NCBIfam" id="NF000768">
    <property type="entry name" value="PRK00051.1"/>
    <property type="match status" value="1"/>
</dbReference>
<dbReference type="PANTHER" id="PTHR42945">
    <property type="entry name" value="HISTIDINE BIOSYNTHESIS BIFUNCTIONAL PROTEIN"/>
    <property type="match status" value="1"/>
</dbReference>
<dbReference type="PANTHER" id="PTHR42945:SF1">
    <property type="entry name" value="HISTIDINE BIOSYNTHESIS BIFUNCTIONAL PROTEIN HIS7"/>
    <property type="match status" value="1"/>
</dbReference>
<dbReference type="Pfam" id="PF01502">
    <property type="entry name" value="PRA-CH"/>
    <property type="match status" value="1"/>
</dbReference>
<dbReference type="SUPFAM" id="SSF141734">
    <property type="entry name" value="HisI-like"/>
    <property type="match status" value="1"/>
</dbReference>
<evidence type="ECO:0000255" key="1">
    <source>
        <dbReference type="HAMAP-Rule" id="MF_01021"/>
    </source>
</evidence>
<feature type="chain" id="PRO_0000229843" description="Phosphoribosyl-AMP cyclohydrolase">
    <location>
        <begin position="1"/>
        <end position="133"/>
    </location>
</feature>
<feature type="binding site" evidence="1">
    <location>
        <position position="77"/>
    </location>
    <ligand>
        <name>Mg(2+)</name>
        <dbReference type="ChEBI" id="CHEBI:18420"/>
    </ligand>
</feature>
<feature type="binding site" evidence="1">
    <location>
        <position position="78"/>
    </location>
    <ligand>
        <name>Zn(2+)</name>
        <dbReference type="ChEBI" id="CHEBI:29105"/>
        <note>ligand shared between dimeric partners</note>
    </ligand>
</feature>
<feature type="binding site" evidence="1">
    <location>
        <position position="79"/>
    </location>
    <ligand>
        <name>Mg(2+)</name>
        <dbReference type="ChEBI" id="CHEBI:18420"/>
    </ligand>
</feature>
<feature type="binding site" evidence="1">
    <location>
        <position position="81"/>
    </location>
    <ligand>
        <name>Mg(2+)</name>
        <dbReference type="ChEBI" id="CHEBI:18420"/>
    </ligand>
</feature>
<feature type="binding site" evidence="1">
    <location>
        <position position="95"/>
    </location>
    <ligand>
        <name>Zn(2+)</name>
        <dbReference type="ChEBI" id="CHEBI:29105"/>
        <note>ligand shared between dimeric partners</note>
    </ligand>
</feature>
<feature type="binding site" evidence="1">
    <location>
        <position position="102"/>
    </location>
    <ligand>
        <name>Zn(2+)</name>
        <dbReference type="ChEBI" id="CHEBI:29105"/>
        <note>ligand shared between dimeric partners</note>
    </ligand>
</feature>
<accession>Q3SEU9</accession>
<protein>
    <recommendedName>
        <fullName evidence="1">Phosphoribosyl-AMP cyclohydrolase</fullName>
        <shortName evidence="1">PRA-CH</shortName>
        <ecNumber evidence="1">3.5.4.19</ecNumber>
    </recommendedName>
</protein>
<reference key="1">
    <citation type="journal article" date="2006" name="J. Bacteriol.">
        <title>The genome sequence of the obligately chemolithoautotrophic, facultatively anaerobic bacterium Thiobacillus denitrificans.</title>
        <authorList>
            <person name="Beller H.R."/>
            <person name="Chain P.S."/>
            <person name="Letain T.E."/>
            <person name="Chakicherla A."/>
            <person name="Larimer F.W."/>
            <person name="Richardson P.M."/>
            <person name="Coleman M.A."/>
            <person name="Wood A.P."/>
            <person name="Kelly D.P."/>
        </authorList>
    </citation>
    <scope>NUCLEOTIDE SEQUENCE [LARGE SCALE GENOMIC DNA]</scope>
    <source>
        <strain>ATCC 25259 / T1</strain>
    </source>
</reference>
<sequence length="133" mass="15122">MSDWLDAVKWDAQGLVPAIAQDAASGEILMVAWMNREALEETARTGRGVYFSRSRHKLWRKGEESGHVQTVSEIRLDCDNDVILLKIEQLGGIACHTGRRSCFFHKLTTDDRGHADWVATEPVLKNPDEIYRR</sequence>
<organism>
    <name type="scientific">Thiobacillus denitrificans (strain ATCC 25259 / T1)</name>
    <dbReference type="NCBI Taxonomy" id="292415"/>
    <lineage>
        <taxon>Bacteria</taxon>
        <taxon>Pseudomonadati</taxon>
        <taxon>Pseudomonadota</taxon>
        <taxon>Betaproteobacteria</taxon>
        <taxon>Nitrosomonadales</taxon>
        <taxon>Thiobacillaceae</taxon>
        <taxon>Thiobacillus</taxon>
    </lineage>
</organism>
<keyword id="KW-0028">Amino-acid biosynthesis</keyword>
<keyword id="KW-0963">Cytoplasm</keyword>
<keyword id="KW-0368">Histidine biosynthesis</keyword>
<keyword id="KW-0378">Hydrolase</keyword>
<keyword id="KW-0460">Magnesium</keyword>
<keyword id="KW-0479">Metal-binding</keyword>
<keyword id="KW-1185">Reference proteome</keyword>
<keyword id="KW-0862">Zinc</keyword>
<comment type="function">
    <text evidence="1">Catalyzes the hydrolysis of the adenine ring of phosphoribosyl-AMP.</text>
</comment>
<comment type="catalytic activity">
    <reaction evidence="1">
        <text>1-(5-phospho-beta-D-ribosyl)-5'-AMP + H2O = 1-(5-phospho-beta-D-ribosyl)-5-[(5-phospho-beta-D-ribosylamino)methylideneamino]imidazole-4-carboxamide</text>
        <dbReference type="Rhea" id="RHEA:20049"/>
        <dbReference type="ChEBI" id="CHEBI:15377"/>
        <dbReference type="ChEBI" id="CHEBI:58435"/>
        <dbReference type="ChEBI" id="CHEBI:59457"/>
        <dbReference type="EC" id="3.5.4.19"/>
    </reaction>
</comment>
<comment type="cofactor">
    <cofactor evidence="1">
        <name>Mg(2+)</name>
        <dbReference type="ChEBI" id="CHEBI:18420"/>
    </cofactor>
    <text evidence="1">Binds 1 Mg(2+) ion per subunit.</text>
</comment>
<comment type="cofactor">
    <cofactor evidence="1">
        <name>Zn(2+)</name>
        <dbReference type="ChEBI" id="CHEBI:29105"/>
    </cofactor>
    <text evidence="1">Binds 1 zinc ion per subunit.</text>
</comment>
<comment type="pathway">
    <text evidence="1">Amino-acid biosynthesis; L-histidine biosynthesis; L-histidine from 5-phospho-alpha-D-ribose 1-diphosphate: step 3/9.</text>
</comment>
<comment type="subunit">
    <text evidence="1">Homodimer.</text>
</comment>
<comment type="subcellular location">
    <subcellularLocation>
        <location evidence="1">Cytoplasm</location>
    </subcellularLocation>
</comment>
<comment type="similarity">
    <text evidence="1">Belongs to the PRA-CH family.</text>
</comment>